<accession>B0UVP8</accession>
<proteinExistence type="inferred from homology"/>
<evidence type="ECO:0000255" key="1">
    <source>
        <dbReference type="HAMAP-Rule" id="MF_00013"/>
    </source>
</evidence>
<evidence type="ECO:0000255" key="2">
    <source>
        <dbReference type="PROSITE-ProRule" id="PRU01067"/>
    </source>
</evidence>
<protein>
    <recommendedName>
        <fullName evidence="1">Octanoyltransferase</fullName>
        <ecNumber evidence="1">2.3.1.181</ecNumber>
    </recommendedName>
    <alternativeName>
        <fullName evidence="1">Lipoate-protein ligase B</fullName>
    </alternativeName>
    <alternativeName>
        <fullName evidence="1">Lipoyl/octanoyl transferase</fullName>
    </alternativeName>
    <alternativeName>
        <fullName evidence="1">Octanoyl-[acyl-carrier-protein]-protein N-octanoyltransferase</fullName>
    </alternativeName>
</protein>
<organism>
    <name type="scientific">Histophilus somni (strain 2336)</name>
    <name type="common">Haemophilus somnus</name>
    <dbReference type="NCBI Taxonomy" id="228400"/>
    <lineage>
        <taxon>Bacteria</taxon>
        <taxon>Pseudomonadati</taxon>
        <taxon>Pseudomonadota</taxon>
        <taxon>Gammaproteobacteria</taxon>
        <taxon>Pasteurellales</taxon>
        <taxon>Pasteurellaceae</taxon>
        <taxon>Histophilus</taxon>
    </lineage>
</organism>
<reference key="1">
    <citation type="submission" date="2008-02" db="EMBL/GenBank/DDBJ databases">
        <title>Complete sequence of Haemophilus somnus 2336.</title>
        <authorList>
            <consortium name="US DOE Joint Genome Institute"/>
            <person name="Siddaramappa S."/>
            <person name="Duncan A.J."/>
            <person name="Challacombe J.F."/>
            <person name="Rainey D."/>
            <person name="Gillaspy A.F."/>
            <person name="Carson M."/>
            <person name="Gipson J."/>
            <person name="Gipson M."/>
            <person name="Bruce D."/>
            <person name="Detter J.C."/>
            <person name="Han C.S."/>
            <person name="Land M."/>
            <person name="Tapia R."/>
            <person name="Thompson L.S."/>
            <person name="Orvis J."/>
            <person name="Zaitshik J."/>
            <person name="Barnes G."/>
            <person name="Brettin T.S."/>
            <person name="Dyer D.W."/>
            <person name="Inzana T.J."/>
        </authorList>
    </citation>
    <scope>NUCLEOTIDE SEQUENCE [LARGE SCALE GENOMIC DNA]</scope>
    <source>
        <strain>2336</strain>
    </source>
</reference>
<comment type="function">
    <text evidence="1">Catalyzes the transfer of endogenously produced octanoic acid from octanoyl-acyl-carrier-protein onto the lipoyl domains of lipoate-dependent enzymes. Lipoyl-ACP can also act as a substrate although octanoyl-ACP is likely to be the physiological substrate.</text>
</comment>
<comment type="catalytic activity">
    <reaction evidence="1">
        <text>octanoyl-[ACP] + L-lysyl-[protein] = N(6)-octanoyl-L-lysyl-[protein] + holo-[ACP] + H(+)</text>
        <dbReference type="Rhea" id="RHEA:17665"/>
        <dbReference type="Rhea" id="RHEA-COMP:9636"/>
        <dbReference type="Rhea" id="RHEA-COMP:9685"/>
        <dbReference type="Rhea" id="RHEA-COMP:9752"/>
        <dbReference type="Rhea" id="RHEA-COMP:9928"/>
        <dbReference type="ChEBI" id="CHEBI:15378"/>
        <dbReference type="ChEBI" id="CHEBI:29969"/>
        <dbReference type="ChEBI" id="CHEBI:64479"/>
        <dbReference type="ChEBI" id="CHEBI:78463"/>
        <dbReference type="ChEBI" id="CHEBI:78809"/>
        <dbReference type="EC" id="2.3.1.181"/>
    </reaction>
</comment>
<comment type="pathway">
    <text evidence="1">Protein modification; protein lipoylation via endogenous pathway; protein N(6)-(lipoyl)lysine from octanoyl-[acyl-carrier-protein]: step 1/2.</text>
</comment>
<comment type="subcellular location">
    <subcellularLocation>
        <location evidence="1">Cytoplasm</location>
    </subcellularLocation>
</comment>
<comment type="miscellaneous">
    <text evidence="1">In the reaction, the free carboxyl group of octanoic acid is attached via an amide linkage to the epsilon-amino group of a specific lysine residue of lipoyl domains of lipoate-dependent enzymes.</text>
</comment>
<comment type="similarity">
    <text evidence="1">Belongs to the LipB family.</text>
</comment>
<gene>
    <name evidence="1" type="primary">lipB</name>
    <name type="ordered locus">HSM_0187</name>
</gene>
<name>LIPB_HISS2</name>
<sequence>MTDTTLIIRQLGIQDYQQVWQQMREFTDTRNVLTADEIWLVQHPAVFTQGQAGKPEHLLNPTDIPVVQSDRGGQITYHGLGQQIMYVLIDIKRHKANGSELNVRQLVTALEQSVVSTLADYGIKSYPKADAPGVYVNEQKICSLGLRIRKGCSFHGLALNINMDLSPFRQINPCGYIGLEMCQMADFIPTEQAQCDKVAPKLVTHFTQLLGYNDVTTY</sequence>
<feature type="chain" id="PRO_1000074005" description="Octanoyltransferase">
    <location>
        <begin position="1"/>
        <end position="218"/>
    </location>
</feature>
<feature type="domain" description="BPL/LPL catalytic" evidence="2">
    <location>
        <begin position="32"/>
        <end position="214"/>
    </location>
</feature>
<feature type="active site" description="Acyl-thioester intermediate" evidence="1">
    <location>
        <position position="174"/>
    </location>
</feature>
<feature type="binding site" evidence="1">
    <location>
        <begin position="71"/>
        <end position="78"/>
    </location>
    <ligand>
        <name>substrate</name>
    </ligand>
</feature>
<feature type="binding site" evidence="1">
    <location>
        <begin position="143"/>
        <end position="145"/>
    </location>
    <ligand>
        <name>substrate</name>
    </ligand>
</feature>
<feature type="binding site" evidence="1">
    <location>
        <begin position="156"/>
        <end position="158"/>
    </location>
    <ligand>
        <name>substrate</name>
    </ligand>
</feature>
<feature type="site" description="Lowers pKa of active site Cys" evidence="1">
    <location>
        <position position="140"/>
    </location>
</feature>
<dbReference type="EC" id="2.3.1.181" evidence="1"/>
<dbReference type="EMBL" id="CP000947">
    <property type="protein sequence ID" value="ACA31660.1"/>
    <property type="molecule type" value="Genomic_DNA"/>
</dbReference>
<dbReference type="RefSeq" id="WP_012340959.1">
    <property type="nucleotide sequence ID" value="NC_010519.1"/>
</dbReference>
<dbReference type="SMR" id="B0UVP8"/>
<dbReference type="STRING" id="228400.HSM_0187"/>
<dbReference type="GeneID" id="31486465"/>
<dbReference type="KEGG" id="hsm:HSM_0187"/>
<dbReference type="HOGENOM" id="CLU_035168_3_1_6"/>
<dbReference type="UniPathway" id="UPA00538">
    <property type="reaction ID" value="UER00592"/>
</dbReference>
<dbReference type="GO" id="GO:0005737">
    <property type="term" value="C:cytoplasm"/>
    <property type="evidence" value="ECO:0007669"/>
    <property type="project" value="UniProtKB-SubCell"/>
</dbReference>
<dbReference type="GO" id="GO:0033819">
    <property type="term" value="F:lipoyl(octanoyl) transferase activity"/>
    <property type="evidence" value="ECO:0007669"/>
    <property type="project" value="UniProtKB-EC"/>
</dbReference>
<dbReference type="GO" id="GO:0036211">
    <property type="term" value="P:protein modification process"/>
    <property type="evidence" value="ECO:0007669"/>
    <property type="project" value="InterPro"/>
</dbReference>
<dbReference type="CDD" id="cd16444">
    <property type="entry name" value="LipB"/>
    <property type="match status" value="1"/>
</dbReference>
<dbReference type="FunFam" id="3.30.930.10:FF:000020">
    <property type="entry name" value="Octanoyltransferase"/>
    <property type="match status" value="1"/>
</dbReference>
<dbReference type="Gene3D" id="3.30.930.10">
    <property type="entry name" value="Bira Bifunctional Protein, Domain 2"/>
    <property type="match status" value="1"/>
</dbReference>
<dbReference type="HAMAP" id="MF_00013">
    <property type="entry name" value="LipB"/>
    <property type="match status" value="1"/>
</dbReference>
<dbReference type="InterPro" id="IPR045864">
    <property type="entry name" value="aa-tRNA-synth_II/BPL/LPL"/>
</dbReference>
<dbReference type="InterPro" id="IPR004143">
    <property type="entry name" value="BPL_LPL_catalytic"/>
</dbReference>
<dbReference type="InterPro" id="IPR000544">
    <property type="entry name" value="Octanoyltransferase"/>
</dbReference>
<dbReference type="InterPro" id="IPR020605">
    <property type="entry name" value="Octanoyltransferase_CS"/>
</dbReference>
<dbReference type="NCBIfam" id="TIGR00214">
    <property type="entry name" value="lipB"/>
    <property type="match status" value="1"/>
</dbReference>
<dbReference type="NCBIfam" id="NF010922">
    <property type="entry name" value="PRK14342.1"/>
    <property type="match status" value="1"/>
</dbReference>
<dbReference type="PANTHER" id="PTHR10993:SF7">
    <property type="entry name" value="LIPOYLTRANSFERASE 2, MITOCHONDRIAL-RELATED"/>
    <property type="match status" value="1"/>
</dbReference>
<dbReference type="PANTHER" id="PTHR10993">
    <property type="entry name" value="OCTANOYLTRANSFERASE"/>
    <property type="match status" value="1"/>
</dbReference>
<dbReference type="Pfam" id="PF21948">
    <property type="entry name" value="LplA-B_cat"/>
    <property type="match status" value="1"/>
</dbReference>
<dbReference type="PIRSF" id="PIRSF016262">
    <property type="entry name" value="LPLase"/>
    <property type="match status" value="1"/>
</dbReference>
<dbReference type="SUPFAM" id="SSF55681">
    <property type="entry name" value="Class II aaRS and biotin synthetases"/>
    <property type="match status" value="1"/>
</dbReference>
<dbReference type="PROSITE" id="PS51733">
    <property type="entry name" value="BPL_LPL_CATALYTIC"/>
    <property type="match status" value="1"/>
</dbReference>
<dbReference type="PROSITE" id="PS01313">
    <property type="entry name" value="LIPB"/>
    <property type="match status" value="1"/>
</dbReference>
<keyword id="KW-0012">Acyltransferase</keyword>
<keyword id="KW-0963">Cytoplasm</keyword>
<keyword id="KW-0808">Transferase</keyword>